<protein>
    <recommendedName>
        <fullName evidence="1">Deoxyribose-phosphate aldolase</fullName>
        <shortName evidence="1">DERA</shortName>
        <ecNumber evidence="1">4.1.2.4</ecNumber>
    </recommendedName>
    <alternativeName>
        <fullName evidence="1">2-deoxy-D-ribose 5-phosphate aldolase</fullName>
    </alternativeName>
    <alternativeName>
        <fullName evidence="1">Phosphodeoxyriboaldolase</fullName>
        <shortName evidence="1">Deoxyriboaldolase</shortName>
    </alternativeName>
</protein>
<evidence type="ECO:0000255" key="1">
    <source>
        <dbReference type="HAMAP-Rule" id="MF_00114"/>
    </source>
</evidence>
<proteinExistence type="inferred from homology"/>
<feature type="chain" id="PRO_0000231557" description="Deoxyribose-phosphate aldolase">
    <location>
        <begin position="1"/>
        <end position="222"/>
    </location>
</feature>
<feature type="active site" description="Proton donor/acceptor" evidence="1">
    <location>
        <position position="93"/>
    </location>
</feature>
<feature type="active site" description="Schiff-base intermediate with acetaldehyde" evidence="1">
    <location>
        <position position="156"/>
    </location>
</feature>
<feature type="active site" description="Proton donor/acceptor" evidence="1">
    <location>
        <position position="186"/>
    </location>
</feature>
<organism>
    <name type="scientific">Nocardia farcinica (strain IFM 10152)</name>
    <dbReference type="NCBI Taxonomy" id="247156"/>
    <lineage>
        <taxon>Bacteria</taxon>
        <taxon>Bacillati</taxon>
        <taxon>Actinomycetota</taxon>
        <taxon>Actinomycetes</taxon>
        <taxon>Mycobacteriales</taxon>
        <taxon>Nocardiaceae</taxon>
        <taxon>Nocardia</taxon>
    </lineage>
</organism>
<accession>Q5YP36</accession>
<keyword id="KW-0963">Cytoplasm</keyword>
<keyword id="KW-0456">Lyase</keyword>
<keyword id="KW-1185">Reference proteome</keyword>
<keyword id="KW-0704">Schiff base</keyword>
<sequence length="222" mass="22343">MAETALPTRAEVAARIDHTLLAPEATDDDVAALVAEARDLGVYAVCVSPSMLPVRAPGLVVATVAGFPSGKHHSLVKGAEARLAVDQGAAEVDMVIDVGAARAGEYSAVLADIVTVREAISDRAVLKVIIESAALSDEAIVEVCRVAERAGADFVKTSTGFHPAGGASVHAVRLMAETVGGRLGIKASGGIRTAAAAAELLAAGATRLGLSKSAAVLDGFPS</sequence>
<name>DEOC_NOCFA</name>
<reference key="1">
    <citation type="journal article" date="2004" name="Proc. Natl. Acad. Sci. U.S.A.">
        <title>The complete genomic sequence of Nocardia farcinica IFM 10152.</title>
        <authorList>
            <person name="Ishikawa J."/>
            <person name="Yamashita A."/>
            <person name="Mikami Y."/>
            <person name="Hoshino Y."/>
            <person name="Kurita H."/>
            <person name="Hotta K."/>
            <person name="Shiba T."/>
            <person name="Hattori M."/>
        </authorList>
    </citation>
    <scope>NUCLEOTIDE SEQUENCE [LARGE SCALE GENOMIC DNA]</scope>
    <source>
        <strain>IFM 10152</strain>
    </source>
</reference>
<gene>
    <name evidence="1" type="primary">deoC</name>
    <name type="ordered locus">NFA_52030</name>
</gene>
<comment type="function">
    <text evidence="1">Catalyzes a reversible aldol reaction between acetaldehyde and D-glyceraldehyde 3-phosphate to generate 2-deoxy-D-ribose 5-phosphate.</text>
</comment>
<comment type="catalytic activity">
    <reaction evidence="1">
        <text>2-deoxy-D-ribose 5-phosphate = D-glyceraldehyde 3-phosphate + acetaldehyde</text>
        <dbReference type="Rhea" id="RHEA:12821"/>
        <dbReference type="ChEBI" id="CHEBI:15343"/>
        <dbReference type="ChEBI" id="CHEBI:59776"/>
        <dbReference type="ChEBI" id="CHEBI:62877"/>
        <dbReference type="EC" id="4.1.2.4"/>
    </reaction>
</comment>
<comment type="pathway">
    <text evidence="1">Carbohydrate degradation; 2-deoxy-D-ribose 1-phosphate degradation; D-glyceraldehyde 3-phosphate and acetaldehyde from 2-deoxy-alpha-D-ribose 1-phosphate: step 2/2.</text>
</comment>
<comment type="subcellular location">
    <subcellularLocation>
        <location evidence="1">Cytoplasm</location>
    </subcellularLocation>
</comment>
<comment type="similarity">
    <text evidence="1">Belongs to the DeoC/FbaB aldolase family. DeoC type 1 subfamily.</text>
</comment>
<dbReference type="EC" id="4.1.2.4" evidence="1"/>
<dbReference type="EMBL" id="AP006618">
    <property type="protein sequence ID" value="BAD60055.1"/>
    <property type="molecule type" value="Genomic_DNA"/>
</dbReference>
<dbReference type="RefSeq" id="WP_011211737.1">
    <property type="nucleotide sequence ID" value="NC_006361.1"/>
</dbReference>
<dbReference type="SMR" id="Q5YP36"/>
<dbReference type="STRING" id="247156.NFA_52030"/>
<dbReference type="GeneID" id="61135779"/>
<dbReference type="KEGG" id="nfa:NFA_52030"/>
<dbReference type="eggNOG" id="COG0274">
    <property type="taxonomic scope" value="Bacteria"/>
</dbReference>
<dbReference type="HOGENOM" id="CLU_053595_0_0_11"/>
<dbReference type="OrthoDB" id="6579831at2"/>
<dbReference type="UniPathway" id="UPA00002">
    <property type="reaction ID" value="UER00468"/>
</dbReference>
<dbReference type="Proteomes" id="UP000006820">
    <property type="component" value="Chromosome"/>
</dbReference>
<dbReference type="GO" id="GO:0005737">
    <property type="term" value="C:cytoplasm"/>
    <property type="evidence" value="ECO:0007669"/>
    <property type="project" value="UniProtKB-SubCell"/>
</dbReference>
<dbReference type="GO" id="GO:0004139">
    <property type="term" value="F:deoxyribose-phosphate aldolase activity"/>
    <property type="evidence" value="ECO:0007669"/>
    <property type="project" value="UniProtKB-UniRule"/>
</dbReference>
<dbReference type="GO" id="GO:0006018">
    <property type="term" value="P:2-deoxyribose 1-phosphate catabolic process"/>
    <property type="evidence" value="ECO:0007669"/>
    <property type="project" value="UniProtKB-UniRule"/>
</dbReference>
<dbReference type="GO" id="GO:0016052">
    <property type="term" value="P:carbohydrate catabolic process"/>
    <property type="evidence" value="ECO:0007669"/>
    <property type="project" value="TreeGrafter"/>
</dbReference>
<dbReference type="GO" id="GO:0009264">
    <property type="term" value="P:deoxyribonucleotide catabolic process"/>
    <property type="evidence" value="ECO:0007669"/>
    <property type="project" value="InterPro"/>
</dbReference>
<dbReference type="CDD" id="cd00959">
    <property type="entry name" value="DeoC"/>
    <property type="match status" value="1"/>
</dbReference>
<dbReference type="FunFam" id="3.20.20.70:FF:000044">
    <property type="entry name" value="Deoxyribose-phosphate aldolase"/>
    <property type="match status" value="1"/>
</dbReference>
<dbReference type="Gene3D" id="3.20.20.70">
    <property type="entry name" value="Aldolase class I"/>
    <property type="match status" value="1"/>
</dbReference>
<dbReference type="HAMAP" id="MF_00114">
    <property type="entry name" value="DeoC_type1"/>
    <property type="match status" value="1"/>
</dbReference>
<dbReference type="InterPro" id="IPR013785">
    <property type="entry name" value="Aldolase_TIM"/>
</dbReference>
<dbReference type="InterPro" id="IPR011343">
    <property type="entry name" value="DeoC"/>
</dbReference>
<dbReference type="InterPro" id="IPR002915">
    <property type="entry name" value="DeoC/FbaB/LacD_aldolase"/>
</dbReference>
<dbReference type="InterPro" id="IPR028581">
    <property type="entry name" value="DeoC_typeI"/>
</dbReference>
<dbReference type="NCBIfam" id="TIGR00126">
    <property type="entry name" value="deoC"/>
    <property type="match status" value="1"/>
</dbReference>
<dbReference type="PANTHER" id="PTHR10889">
    <property type="entry name" value="DEOXYRIBOSE-PHOSPHATE ALDOLASE"/>
    <property type="match status" value="1"/>
</dbReference>
<dbReference type="PANTHER" id="PTHR10889:SF1">
    <property type="entry name" value="DEOXYRIBOSE-PHOSPHATE ALDOLASE"/>
    <property type="match status" value="1"/>
</dbReference>
<dbReference type="Pfam" id="PF01791">
    <property type="entry name" value="DeoC"/>
    <property type="match status" value="1"/>
</dbReference>
<dbReference type="PIRSF" id="PIRSF001357">
    <property type="entry name" value="DeoC"/>
    <property type="match status" value="1"/>
</dbReference>
<dbReference type="SMART" id="SM01133">
    <property type="entry name" value="DeoC"/>
    <property type="match status" value="1"/>
</dbReference>
<dbReference type="SUPFAM" id="SSF51569">
    <property type="entry name" value="Aldolase"/>
    <property type="match status" value="1"/>
</dbReference>